<proteinExistence type="inferred from homology"/>
<feature type="chain" id="PRO_1000214988" description="Large ribosomal subunit protein uL14">
    <location>
        <begin position="1"/>
        <end position="122"/>
    </location>
</feature>
<reference key="1">
    <citation type="journal article" date="2009" name="Genome Biol.">
        <title>Genomic and genetic analyses of diversity and plant interactions of Pseudomonas fluorescens.</title>
        <authorList>
            <person name="Silby M.W."/>
            <person name="Cerdeno-Tarraga A.M."/>
            <person name="Vernikos G.S."/>
            <person name="Giddens S.R."/>
            <person name="Jackson R.W."/>
            <person name="Preston G.M."/>
            <person name="Zhang X.-X."/>
            <person name="Moon C.D."/>
            <person name="Gehrig S.M."/>
            <person name="Godfrey S.A.C."/>
            <person name="Knight C.G."/>
            <person name="Malone J.G."/>
            <person name="Robinson Z."/>
            <person name="Spiers A.J."/>
            <person name="Harris S."/>
            <person name="Challis G.L."/>
            <person name="Yaxley A.M."/>
            <person name="Harris D."/>
            <person name="Seeger K."/>
            <person name="Murphy L."/>
            <person name="Rutter S."/>
            <person name="Squares R."/>
            <person name="Quail M.A."/>
            <person name="Saunders E."/>
            <person name="Mavromatis K."/>
            <person name="Brettin T.S."/>
            <person name="Bentley S.D."/>
            <person name="Hothersall J."/>
            <person name="Stephens E."/>
            <person name="Thomas C.M."/>
            <person name="Parkhill J."/>
            <person name="Levy S.B."/>
            <person name="Rainey P.B."/>
            <person name="Thomson N.R."/>
        </authorList>
    </citation>
    <scope>NUCLEOTIDE SEQUENCE [LARGE SCALE GENOMIC DNA]</scope>
    <source>
        <strain>SBW25</strain>
    </source>
</reference>
<keyword id="KW-0687">Ribonucleoprotein</keyword>
<keyword id="KW-0689">Ribosomal protein</keyword>
<keyword id="KW-0694">RNA-binding</keyword>
<keyword id="KW-0699">rRNA-binding</keyword>
<protein>
    <recommendedName>
        <fullName evidence="1">Large ribosomal subunit protein uL14</fullName>
    </recommendedName>
    <alternativeName>
        <fullName evidence="2">50S ribosomal protein L14</fullName>
    </alternativeName>
</protein>
<dbReference type="EMBL" id="AM181176">
    <property type="protein sequence ID" value="CAY52749.1"/>
    <property type="molecule type" value="Genomic_DNA"/>
</dbReference>
<dbReference type="RefSeq" id="WP_002555479.1">
    <property type="nucleotide sequence ID" value="NC_012660.1"/>
</dbReference>
<dbReference type="SMR" id="C3K2W6"/>
<dbReference type="STRING" id="294.SRM1_05169"/>
<dbReference type="GeneID" id="98285428"/>
<dbReference type="eggNOG" id="COG0093">
    <property type="taxonomic scope" value="Bacteria"/>
</dbReference>
<dbReference type="HOGENOM" id="CLU_095071_2_1_6"/>
<dbReference type="OrthoDB" id="9806379at2"/>
<dbReference type="GO" id="GO:0022625">
    <property type="term" value="C:cytosolic large ribosomal subunit"/>
    <property type="evidence" value="ECO:0007669"/>
    <property type="project" value="TreeGrafter"/>
</dbReference>
<dbReference type="GO" id="GO:0070180">
    <property type="term" value="F:large ribosomal subunit rRNA binding"/>
    <property type="evidence" value="ECO:0007669"/>
    <property type="project" value="TreeGrafter"/>
</dbReference>
<dbReference type="GO" id="GO:0003735">
    <property type="term" value="F:structural constituent of ribosome"/>
    <property type="evidence" value="ECO:0007669"/>
    <property type="project" value="InterPro"/>
</dbReference>
<dbReference type="GO" id="GO:0006412">
    <property type="term" value="P:translation"/>
    <property type="evidence" value="ECO:0007669"/>
    <property type="project" value="UniProtKB-UniRule"/>
</dbReference>
<dbReference type="CDD" id="cd00337">
    <property type="entry name" value="Ribosomal_uL14"/>
    <property type="match status" value="1"/>
</dbReference>
<dbReference type="FunFam" id="2.40.150.20:FF:000001">
    <property type="entry name" value="50S ribosomal protein L14"/>
    <property type="match status" value="1"/>
</dbReference>
<dbReference type="Gene3D" id="2.40.150.20">
    <property type="entry name" value="Ribosomal protein L14"/>
    <property type="match status" value="1"/>
</dbReference>
<dbReference type="HAMAP" id="MF_01367">
    <property type="entry name" value="Ribosomal_uL14"/>
    <property type="match status" value="1"/>
</dbReference>
<dbReference type="InterPro" id="IPR000218">
    <property type="entry name" value="Ribosomal_uL14"/>
</dbReference>
<dbReference type="InterPro" id="IPR005745">
    <property type="entry name" value="Ribosomal_uL14_bac-type"/>
</dbReference>
<dbReference type="InterPro" id="IPR019972">
    <property type="entry name" value="Ribosomal_uL14_CS"/>
</dbReference>
<dbReference type="InterPro" id="IPR036853">
    <property type="entry name" value="Ribosomal_uL14_sf"/>
</dbReference>
<dbReference type="NCBIfam" id="TIGR01067">
    <property type="entry name" value="rplN_bact"/>
    <property type="match status" value="1"/>
</dbReference>
<dbReference type="PANTHER" id="PTHR11761">
    <property type="entry name" value="50S/60S RIBOSOMAL PROTEIN L14/L23"/>
    <property type="match status" value="1"/>
</dbReference>
<dbReference type="PANTHER" id="PTHR11761:SF3">
    <property type="entry name" value="LARGE RIBOSOMAL SUBUNIT PROTEIN UL14M"/>
    <property type="match status" value="1"/>
</dbReference>
<dbReference type="Pfam" id="PF00238">
    <property type="entry name" value="Ribosomal_L14"/>
    <property type="match status" value="1"/>
</dbReference>
<dbReference type="SMART" id="SM01374">
    <property type="entry name" value="Ribosomal_L14"/>
    <property type="match status" value="1"/>
</dbReference>
<dbReference type="SUPFAM" id="SSF50193">
    <property type="entry name" value="Ribosomal protein L14"/>
    <property type="match status" value="1"/>
</dbReference>
<dbReference type="PROSITE" id="PS00049">
    <property type="entry name" value="RIBOSOMAL_L14"/>
    <property type="match status" value="1"/>
</dbReference>
<comment type="function">
    <text evidence="1">Binds to 23S rRNA. Forms part of two intersubunit bridges in the 70S ribosome.</text>
</comment>
<comment type="subunit">
    <text evidence="1">Part of the 50S ribosomal subunit. Forms a cluster with proteins L3 and L19. In the 70S ribosome, L14 and L19 interact and together make contacts with the 16S rRNA in bridges B5 and B8.</text>
</comment>
<comment type="similarity">
    <text evidence="1">Belongs to the universal ribosomal protein uL14 family.</text>
</comment>
<evidence type="ECO:0000255" key="1">
    <source>
        <dbReference type="HAMAP-Rule" id="MF_01367"/>
    </source>
</evidence>
<evidence type="ECO:0000305" key="2"/>
<organism>
    <name type="scientific">Pseudomonas fluorescens (strain SBW25)</name>
    <dbReference type="NCBI Taxonomy" id="216595"/>
    <lineage>
        <taxon>Bacteria</taxon>
        <taxon>Pseudomonadati</taxon>
        <taxon>Pseudomonadota</taxon>
        <taxon>Gammaproteobacteria</taxon>
        <taxon>Pseudomonadales</taxon>
        <taxon>Pseudomonadaceae</taxon>
        <taxon>Pseudomonas</taxon>
    </lineage>
</organism>
<accession>C3K2W6</accession>
<sequence>MIQTQSMLDVADNSGARRVMCIKVLGGSHRRYAGIGDIIKVTVKEAIPRGKVKKGQVMTAVVVRTRHGVRRADGSIIRFDGNAAVLLNNKQEPIGTRIFGPVTRELRTEKFMKIVSLAPEVL</sequence>
<name>RL14_PSEFS</name>
<gene>
    <name evidence="1" type="primary">rplN</name>
    <name type="ordered locus">PFLU_5517</name>
</gene>